<gene>
    <name evidence="1" type="primary">ruvA</name>
    <name type="ordered locus">Sama_1840</name>
</gene>
<keyword id="KW-0963">Cytoplasm</keyword>
<keyword id="KW-0227">DNA damage</keyword>
<keyword id="KW-0233">DNA recombination</keyword>
<keyword id="KW-0234">DNA repair</keyword>
<keyword id="KW-0238">DNA-binding</keyword>
<keyword id="KW-1185">Reference proteome</keyword>
<feature type="chain" id="PRO_1000002545" description="Holliday junction branch migration complex subunit RuvA">
    <location>
        <begin position="1"/>
        <end position="205"/>
    </location>
</feature>
<feature type="region of interest" description="Domain I" evidence="1">
    <location>
        <begin position="1"/>
        <end position="64"/>
    </location>
</feature>
<feature type="region of interest" description="Domain II" evidence="1">
    <location>
        <begin position="65"/>
        <end position="143"/>
    </location>
</feature>
<feature type="region of interest" description="Flexible linker" evidence="1">
    <location>
        <begin position="144"/>
        <end position="156"/>
    </location>
</feature>
<feature type="region of interest" description="Domain III" evidence="1">
    <location>
        <begin position="157"/>
        <end position="205"/>
    </location>
</feature>
<name>RUVA_SHEAM</name>
<organism>
    <name type="scientific">Shewanella amazonensis (strain ATCC BAA-1098 / SB2B)</name>
    <dbReference type="NCBI Taxonomy" id="326297"/>
    <lineage>
        <taxon>Bacteria</taxon>
        <taxon>Pseudomonadati</taxon>
        <taxon>Pseudomonadota</taxon>
        <taxon>Gammaproteobacteria</taxon>
        <taxon>Alteromonadales</taxon>
        <taxon>Shewanellaceae</taxon>
        <taxon>Shewanella</taxon>
    </lineage>
</organism>
<proteinExistence type="inferred from homology"/>
<protein>
    <recommendedName>
        <fullName evidence="1">Holliday junction branch migration complex subunit RuvA</fullName>
    </recommendedName>
</protein>
<sequence>MIGRLKGILVEKHAPEVLIDVGGVGYELQMPLTSFYELPLPGAEVIVYTHFVVREDAQLLYGFIHKEERSLFRLLIKANGVGPKLALTILSGMTAKEFIGCLERDDIATLIKLPGVGKKTAERLLVEMRDKLKSLMEASMGAEREFVLKSNFTPAPVAATVEEDAIAALLSLGYKPQQASKAVSSAFQEGMDPEQLIKAALKSML</sequence>
<comment type="function">
    <text evidence="1">The RuvA-RuvB-RuvC complex processes Holliday junction (HJ) DNA during genetic recombination and DNA repair, while the RuvA-RuvB complex plays an important role in the rescue of blocked DNA replication forks via replication fork reversal (RFR). RuvA specifically binds to HJ cruciform DNA, conferring on it an open structure. The RuvB hexamer acts as an ATP-dependent pump, pulling dsDNA into and through the RuvAB complex. HJ branch migration allows RuvC to scan DNA until it finds its consensus sequence, where it cleaves and resolves the cruciform DNA.</text>
</comment>
<comment type="subunit">
    <text evidence="1">Homotetramer. Forms an RuvA(8)-RuvB(12)-Holliday junction (HJ) complex. HJ DNA is sandwiched between 2 RuvA tetramers; dsDNA enters through RuvA and exits via RuvB. An RuvB hexamer assembles on each DNA strand where it exits the tetramer. Each RuvB hexamer is contacted by two RuvA subunits (via domain III) on 2 adjacent RuvB subunits; this complex drives branch migration. In the full resolvosome a probable DNA-RuvA(4)-RuvB(12)-RuvC(2) complex forms which resolves the HJ.</text>
</comment>
<comment type="subcellular location">
    <subcellularLocation>
        <location evidence="1">Cytoplasm</location>
    </subcellularLocation>
</comment>
<comment type="domain">
    <text evidence="1">Has three domains with a flexible linker between the domains II and III and assumes an 'L' shape. Domain III is highly mobile and contacts RuvB.</text>
</comment>
<comment type="similarity">
    <text evidence="1">Belongs to the RuvA family.</text>
</comment>
<evidence type="ECO:0000255" key="1">
    <source>
        <dbReference type="HAMAP-Rule" id="MF_00031"/>
    </source>
</evidence>
<reference key="1">
    <citation type="submission" date="2006-12" db="EMBL/GenBank/DDBJ databases">
        <title>Complete sequence of Shewanella amazonensis SB2B.</title>
        <authorList>
            <consortium name="US DOE Joint Genome Institute"/>
            <person name="Copeland A."/>
            <person name="Lucas S."/>
            <person name="Lapidus A."/>
            <person name="Barry K."/>
            <person name="Detter J.C."/>
            <person name="Glavina del Rio T."/>
            <person name="Hammon N."/>
            <person name="Israni S."/>
            <person name="Dalin E."/>
            <person name="Tice H."/>
            <person name="Pitluck S."/>
            <person name="Munk A.C."/>
            <person name="Brettin T."/>
            <person name="Bruce D."/>
            <person name="Han C."/>
            <person name="Tapia R."/>
            <person name="Gilna P."/>
            <person name="Schmutz J."/>
            <person name="Larimer F."/>
            <person name="Land M."/>
            <person name="Hauser L."/>
            <person name="Kyrpides N."/>
            <person name="Mikhailova N."/>
            <person name="Fredrickson J."/>
            <person name="Richardson P."/>
        </authorList>
    </citation>
    <scope>NUCLEOTIDE SEQUENCE [LARGE SCALE GENOMIC DNA]</scope>
    <source>
        <strain>ATCC BAA-1098 / SB2B</strain>
    </source>
</reference>
<accession>A1S6N9</accession>
<dbReference type="EMBL" id="CP000507">
    <property type="protein sequence ID" value="ABM00046.1"/>
    <property type="molecule type" value="Genomic_DNA"/>
</dbReference>
<dbReference type="RefSeq" id="WP_011759953.1">
    <property type="nucleotide sequence ID" value="NC_008700.1"/>
</dbReference>
<dbReference type="SMR" id="A1S6N9"/>
<dbReference type="STRING" id="326297.Sama_1840"/>
<dbReference type="KEGG" id="saz:Sama_1840"/>
<dbReference type="eggNOG" id="COG0632">
    <property type="taxonomic scope" value="Bacteria"/>
</dbReference>
<dbReference type="HOGENOM" id="CLU_087936_0_0_6"/>
<dbReference type="OrthoDB" id="5293449at2"/>
<dbReference type="Proteomes" id="UP000009175">
    <property type="component" value="Chromosome"/>
</dbReference>
<dbReference type="GO" id="GO:0005737">
    <property type="term" value="C:cytoplasm"/>
    <property type="evidence" value="ECO:0007669"/>
    <property type="project" value="UniProtKB-SubCell"/>
</dbReference>
<dbReference type="GO" id="GO:0009379">
    <property type="term" value="C:Holliday junction helicase complex"/>
    <property type="evidence" value="ECO:0007669"/>
    <property type="project" value="InterPro"/>
</dbReference>
<dbReference type="GO" id="GO:0048476">
    <property type="term" value="C:Holliday junction resolvase complex"/>
    <property type="evidence" value="ECO:0007669"/>
    <property type="project" value="UniProtKB-UniRule"/>
</dbReference>
<dbReference type="GO" id="GO:0005524">
    <property type="term" value="F:ATP binding"/>
    <property type="evidence" value="ECO:0007669"/>
    <property type="project" value="InterPro"/>
</dbReference>
<dbReference type="GO" id="GO:0000400">
    <property type="term" value="F:four-way junction DNA binding"/>
    <property type="evidence" value="ECO:0007669"/>
    <property type="project" value="UniProtKB-UniRule"/>
</dbReference>
<dbReference type="GO" id="GO:0009378">
    <property type="term" value="F:four-way junction helicase activity"/>
    <property type="evidence" value="ECO:0007669"/>
    <property type="project" value="InterPro"/>
</dbReference>
<dbReference type="GO" id="GO:0006310">
    <property type="term" value="P:DNA recombination"/>
    <property type="evidence" value="ECO:0007669"/>
    <property type="project" value="UniProtKB-UniRule"/>
</dbReference>
<dbReference type="GO" id="GO:0006281">
    <property type="term" value="P:DNA repair"/>
    <property type="evidence" value="ECO:0007669"/>
    <property type="project" value="UniProtKB-UniRule"/>
</dbReference>
<dbReference type="CDD" id="cd14332">
    <property type="entry name" value="UBA_RuvA_C"/>
    <property type="match status" value="1"/>
</dbReference>
<dbReference type="Gene3D" id="1.10.150.20">
    <property type="entry name" value="5' to 3' exonuclease, C-terminal subdomain"/>
    <property type="match status" value="1"/>
</dbReference>
<dbReference type="Gene3D" id="1.10.8.10">
    <property type="entry name" value="DNA helicase RuvA subunit, C-terminal domain"/>
    <property type="match status" value="1"/>
</dbReference>
<dbReference type="Gene3D" id="2.40.50.140">
    <property type="entry name" value="Nucleic acid-binding proteins"/>
    <property type="match status" value="1"/>
</dbReference>
<dbReference type="HAMAP" id="MF_00031">
    <property type="entry name" value="DNA_HJ_migration_RuvA"/>
    <property type="match status" value="1"/>
</dbReference>
<dbReference type="InterPro" id="IPR013849">
    <property type="entry name" value="DNA_helicase_Holl-junc_RuvA_I"/>
</dbReference>
<dbReference type="InterPro" id="IPR003583">
    <property type="entry name" value="Hlx-hairpin-Hlx_DNA-bd_motif"/>
</dbReference>
<dbReference type="InterPro" id="IPR012340">
    <property type="entry name" value="NA-bd_OB-fold"/>
</dbReference>
<dbReference type="InterPro" id="IPR000085">
    <property type="entry name" value="RuvA"/>
</dbReference>
<dbReference type="InterPro" id="IPR010994">
    <property type="entry name" value="RuvA_2-like"/>
</dbReference>
<dbReference type="InterPro" id="IPR011114">
    <property type="entry name" value="RuvA_C"/>
</dbReference>
<dbReference type="InterPro" id="IPR036267">
    <property type="entry name" value="RuvA_C_sf"/>
</dbReference>
<dbReference type="NCBIfam" id="TIGR00084">
    <property type="entry name" value="ruvA"/>
    <property type="match status" value="1"/>
</dbReference>
<dbReference type="Pfam" id="PF14520">
    <property type="entry name" value="HHH_5"/>
    <property type="match status" value="1"/>
</dbReference>
<dbReference type="Pfam" id="PF07499">
    <property type="entry name" value="RuvA_C"/>
    <property type="match status" value="1"/>
</dbReference>
<dbReference type="Pfam" id="PF01330">
    <property type="entry name" value="RuvA_N"/>
    <property type="match status" value="1"/>
</dbReference>
<dbReference type="SMART" id="SM00278">
    <property type="entry name" value="HhH1"/>
    <property type="match status" value="2"/>
</dbReference>
<dbReference type="SUPFAM" id="SSF46929">
    <property type="entry name" value="DNA helicase RuvA subunit, C-terminal domain"/>
    <property type="match status" value="1"/>
</dbReference>
<dbReference type="SUPFAM" id="SSF50249">
    <property type="entry name" value="Nucleic acid-binding proteins"/>
    <property type="match status" value="1"/>
</dbReference>
<dbReference type="SUPFAM" id="SSF47781">
    <property type="entry name" value="RuvA domain 2-like"/>
    <property type="match status" value="1"/>
</dbReference>